<proteinExistence type="inferred from homology"/>
<comment type="function">
    <text evidence="1">Involved in the binding of tRNA to the ribosomes.</text>
</comment>
<comment type="subunit">
    <text evidence="1">Part of the 30S ribosomal subunit.</text>
</comment>
<comment type="similarity">
    <text evidence="1">Belongs to the universal ribosomal protein uS10 family.</text>
</comment>
<comment type="sequence caution" evidence="2">
    <conflict type="erroneous initiation">
        <sequence resource="EMBL-CDS" id="AAZ34477"/>
    </conflict>
</comment>
<organism>
    <name type="scientific">Pseudomonas savastanoi pv. phaseolicola (strain 1448A / Race 6)</name>
    <name type="common">Pseudomonas syringae pv. phaseolicola (strain 1448A / Race 6)</name>
    <dbReference type="NCBI Taxonomy" id="264730"/>
    <lineage>
        <taxon>Bacteria</taxon>
        <taxon>Pseudomonadati</taxon>
        <taxon>Pseudomonadota</taxon>
        <taxon>Gammaproteobacteria</taxon>
        <taxon>Pseudomonadales</taxon>
        <taxon>Pseudomonadaceae</taxon>
        <taxon>Pseudomonas</taxon>
    </lineage>
</organism>
<evidence type="ECO:0000255" key="1">
    <source>
        <dbReference type="HAMAP-Rule" id="MF_00508"/>
    </source>
</evidence>
<evidence type="ECO:0000305" key="2"/>
<gene>
    <name evidence="1" type="primary">rpsJ</name>
    <name type="ordered locus">PSPPH_4593</name>
</gene>
<name>RS10_PSE14</name>
<accession>Q48D35</accession>
<dbReference type="EMBL" id="CP000058">
    <property type="protein sequence ID" value="AAZ34477.1"/>
    <property type="status" value="ALT_INIT"/>
    <property type="molecule type" value="Genomic_DNA"/>
</dbReference>
<dbReference type="RefSeq" id="WP_002555491.1">
    <property type="nucleotide sequence ID" value="NC_005773.3"/>
</dbReference>
<dbReference type="SMR" id="Q48D35"/>
<dbReference type="GeneID" id="96221031"/>
<dbReference type="KEGG" id="psp:PSPPH_4593"/>
<dbReference type="eggNOG" id="COG0051">
    <property type="taxonomic scope" value="Bacteria"/>
</dbReference>
<dbReference type="HOGENOM" id="CLU_122625_1_2_6"/>
<dbReference type="Proteomes" id="UP000000551">
    <property type="component" value="Chromosome"/>
</dbReference>
<dbReference type="GO" id="GO:1990904">
    <property type="term" value="C:ribonucleoprotein complex"/>
    <property type="evidence" value="ECO:0007669"/>
    <property type="project" value="UniProtKB-KW"/>
</dbReference>
<dbReference type="GO" id="GO:0005840">
    <property type="term" value="C:ribosome"/>
    <property type="evidence" value="ECO:0007669"/>
    <property type="project" value="UniProtKB-KW"/>
</dbReference>
<dbReference type="GO" id="GO:0003735">
    <property type="term" value="F:structural constituent of ribosome"/>
    <property type="evidence" value="ECO:0007669"/>
    <property type="project" value="InterPro"/>
</dbReference>
<dbReference type="GO" id="GO:0000049">
    <property type="term" value="F:tRNA binding"/>
    <property type="evidence" value="ECO:0007669"/>
    <property type="project" value="UniProtKB-UniRule"/>
</dbReference>
<dbReference type="GO" id="GO:0006412">
    <property type="term" value="P:translation"/>
    <property type="evidence" value="ECO:0007669"/>
    <property type="project" value="UniProtKB-UniRule"/>
</dbReference>
<dbReference type="FunFam" id="3.30.70.600:FF:000001">
    <property type="entry name" value="30S ribosomal protein S10"/>
    <property type="match status" value="1"/>
</dbReference>
<dbReference type="Gene3D" id="3.30.70.600">
    <property type="entry name" value="Ribosomal protein S10 domain"/>
    <property type="match status" value="1"/>
</dbReference>
<dbReference type="HAMAP" id="MF_00508">
    <property type="entry name" value="Ribosomal_uS10"/>
    <property type="match status" value="1"/>
</dbReference>
<dbReference type="InterPro" id="IPR001848">
    <property type="entry name" value="Ribosomal_uS10"/>
</dbReference>
<dbReference type="InterPro" id="IPR018268">
    <property type="entry name" value="Ribosomal_uS10_CS"/>
</dbReference>
<dbReference type="InterPro" id="IPR027486">
    <property type="entry name" value="Ribosomal_uS10_dom"/>
</dbReference>
<dbReference type="InterPro" id="IPR036838">
    <property type="entry name" value="Ribosomal_uS10_dom_sf"/>
</dbReference>
<dbReference type="NCBIfam" id="NF001861">
    <property type="entry name" value="PRK00596.1"/>
    <property type="match status" value="1"/>
</dbReference>
<dbReference type="NCBIfam" id="TIGR01049">
    <property type="entry name" value="rpsJ_bact"/>
    <property type="match status" value="1"/>
</dbReference>
<dbReference type="PANTHER" id="PTHR11700">
    <property type="entry name" value="30S RIBOSOMAL PROTEIN S10 FAMILY MEMBER"/>
    <property type="match status" value="1"/>
</dbReference>
<dbReference type="Pfam" id="PF00338">
    <property type="entry name" value="Ribosomal_S10"/>
    <property type="match status" value="1"/>
</dbReference>
<dbReference type="PRINTS" id="PR00971">
    <property type="entry name" value="RIBOSOMALS10"/>
</dbReference>
<dbReference type="SMART" id="SM01403">
    <property type="entry name" value="Ribosomal_S10"/>
    <property type="match status" value="1"/>
</dbReference>
<dbReference type="SUPFAM" id="SSF54999">
    <property type="entry name" value="Ribosomal protein S10"/>
    <property type="match status" value="1"/>
</dbReference>
<dbReference type="PROSITE" id="PS00361">
    <property type="entry name" value="RIBOSOMAL_S10"/>
    <property type="match status" value="1"/>
</dbReference>
<keyword id="KW-0687">Ribonucleoprotein</keyword>
<keyword id="KW-0689">Ribosomal protein</keyword>
<reference key="1">
    <citation type="journal article" date="2005" name="J. Bacteriol.">
        <title>Whole-genome sequence analysis of Pseudomonas syringae pv. phaseolicola 1448A reveals divergence among pathovars in genes involved in virulence and transposition.</title>
        <authorList>
            <person name="Joardar V."/>
            <person name="Lindeberg M."/>
            <person name="Jackson R.W."/>
            <person name="Selengut J."/>
            <person name="Dodson R."/>
            <person name="Brinkac L.M."/>
            <person name="Daugherty S.C."/>
            <person name="DeBoy R.T."/>
            <person name="Durkin A.S."/>
            <person name="Gwinn Giglio M."/>
            <person name="Madupu R."/>
            <person name="Nelson W.C."/>
            <person name="Rosovitz M.J."/>
            <person name="Sullivan S.A."/>
            <person name="Crabtree J."/>
            <person name="Creasy T."/>
            <person name="Davidsen T.M."/>
            <person name="Haft D.H."/>
            <person name="Zafar N."/>
            <person name="Zhou L."/>
            <person name="Halpin R."/>
            <person name="Holley T."/>
            <person name="Khouri H.M."/>
            <person name="Feldblyum T.V."/>
            <person name="White O."/>
            <person name="Fraser C.M."/>
            <person name="Chatterjee A.K."/>
            <person name="Cartinhour S."/>
            <person name="Schneider D."/>
            <person name="Mansfield J.W."/>
            <person name="Collmer A."/>
            <person name="Buell R."/>
        </authorList>
    </citation>
    <scope>NUCLEOTIDE SEQUENCE [LARGE SCALE GENOMIC DNA]</scope>
    <source>
        <strain>1448A / Race 6</strain>
    </source>
</reference>
<feature type="chain" id="PRO_0000237082" description="Small ribosomal subunit protein uS10">
    <location>
        <begin position="1"/>
        <end position="103"/>
    </location>
</feature>
<sequence length="103" mass="11767">MQNQQIRIRLKAFDHRLIDQSTQEIVETAKRTGAQVRGPIPLPTRKERFTVLVSPHVNKDARDQYEIRTHKRVLDIVQPTEKTVDALMKLDLAAGVEVQISLG</sequence>
<protein>
    <recommendedName>
        <fullName evidence="1">Small ribosomal subunit protein uS10</fullName>
    </recommendedName>
    <alternativeName>
        <fullName evidence="2">30S ribosomal protein S10</fullName>
    </alternativeName>
</protein>